<dbReference type="EMBL" id="CP000688">
    <property type="protein sequence ID" value="ABQ17507.1"/>
    <property type="molecule type" value="Genomic_DNA"/>
</dbReference>
<dbReference type="SMR" id="A5FQL1"/>
<dbReference type="KEGG" id="deb:DehaBAV1_0927"/>
<dbReference type="PATRIC" id="fig|216389.18.peg.979"/>
<dbReference type="HOGENOM" id="CLU_144045_0_0_0"/>
<dbReference type="GO" id="GO:0022627">
    <property type="term" value="C:cytosolic small ribosomal subunit"/>
    <property type="evidence" value="ECO:0007669"/>
    <property type="project" value="TreeGrafter"/>
</dbReference>
<dbReference type="GO" id="GO:0070181">
    <property type="term" value="F:small ribosomal subunit rRNA binding"/>
    <property type="evidence" value="ECO:0007669"/>
    <property type="project" value="TreeGrafter"/>
</dbReference>
<dbReference type="GO" id="GO:0003735">
    <property type="term" value="F:structural constituent of ribosome"/>
    <property type="evidence" value="ECO:0007669"/>
    <property type="project" value="InterPro"/>
</dbReference>
<dbReference type="GO" id="GO:0006412">
    <property type="term" value="P:translation"/>
    <property type="evidence" value="ECO:0007669"/>
    <property type="project" value="UniProtKB-UniRule"/>
</dbReference>
<dbReference type="Gene3D" id="4.10.640.10">
    <property type="entry name" value="Ribosomal protein S18"/>
    <property type="match status" value="1"/>
</dbReference>
<dbReference type="HAMAP" id="MF_00270">
    <property type="entry name" value="Ribosomal_bS18"/>
    <property type="match status" value="1"/>
</dbReference>
<dbReference type="InterPro" id="IPR001648">
    <property type="entry name" value="Ribosomal_bS18"/>
</dbReference>
<dbReference type="InterPro" id="IPR018275">
    <property type="entry name" value="Ribosomal_bS18_CS"/>
</dbReference>
<dbReference type="InterPro" id="IPR036870">
    <property type="entry name" value="Ribosomal_bS18_sf"/>
</dbReference>
<dbReference type="NCBIfam" id="TIGR00165">
    <property type="entry name" value="S18"/>
    <property type="match status" value="1"/>
</dbReference>
<dbReference type="PANTHER" id="PTHR13479">
    <property type="entry name" value="30S RIBOSOMAL PROTEIN S18"/>
    <property type="match status" value="1"/>
</dbReference>
<dbReference type="PANTHER" id="PTHR13479:SF40">
    <property type="entry name" value="SMALL RIBOSOMAL SUBUNIT PROTEIN BS18M"/>
    <property type="match status" value="1"/>
</dbReference>
<dbReference type="Pfam" id="PF01084">
    <property type="entry name" value="Ribosomal_S18"/>
    <property type="match status" value="1"/>
</dbReference>
<dbReference type="PRINTS" id="PR00974">
    <property type="entry name" value="RIBOSOMALS18"/>
</dbReference>
<dbReference type="SUPFAM" id="SSF46911">
    <property type="entry name" value="Ribosomal protein S18"/>
    <property type="match status" value="1"/>
</dbReference>
<dbReference type="PROSITE" id="PS00057">
    <property type="entry name" value="RIBOSOMAL_S18"/>
    <property type="match status" value="1"/>
</dbReference>
<feature type="chain" id="PRO_0000345455" description="Small ribosomal subunit protein bS18">
    <location>
        <begin position="1"/>
        <end position="147"/>
    </location>
</feature>
<evidence type="ECO:0000255" key="1">
    <source>
        <dbReference type="HAMAP-Rule" id="MF_00270"/>
    </source>
</evidence>
<evidence type="ECO:0000305" key="2"/>
<organism>
    <name type="scientific">Dehalococcoides mccartyi (strain ATCC BAA-2100 / JCM 16839 / KCTC 5957 / BAV1)</name>
    <dbReference type="NCBI Taxonomy" id="216389"/>
    <lineage>
        <taxon>Bacteria</taxon>
        <taxon>Bacillati</taxon>
        <taxon>Chloroflexota</taxon>
        <taxon>Dehalococcoidia</taxon>
        <taxon>Dehalococcoidales</taxon>
        <taxon>Dehalococcoidaceae</taxon>
        <taxon>Dehalococcoides</taxon>
    </lineage>
</organism>
<name>RS18_DEHMB</name>
<accession>A5FQL1</accession>
<sequence>MSIQDRPNRPARGGRGRYTPKRKICSFCAEKVSRIDYKDSAKLARYISDRGKIEPRRRTGTCARHQRALANAIKRARFIALMPFVSEHVRRQGNVATFSPIRELRPEPKIAEAKIEPKVEVKAEVAVPEVKAEVKPAAEASKPAESA</sequence>
<keyword id="KW-0687">Ribonucleoprotein</keyword>
<keyword id="KW-0689">Ribosomal protein</keyword>
<keyword id="KW-0694">RNA-binding</keyword>
<keyword id="KW-0699">rRNA-binding</keyword>
<proteinExistence type="inferred from homology"/>
<comment type="function">
    <text evidence="1">Binds as a heterodimer with protein bS6 to the central domain of the 16S rRNA, where it helps stabilize the platform of the 30S subunit.</text>
</comment>
<comment type="subunit">
    <text evidence="1">Part of the 30S ribosomal subunit. Forms a tight heterodimer with protein bS6.</text>
</comment>
<comment type="similarity">
    <text evidence="1">Belongs to the bacterial ribosomal protein bS18 family.</text>
</comment>
<protein>
    <recommendedName>
        <fullName evidence="1">Small ribosomal subunit protein bS18</fullName>
    </recommendedName>
    <alternativeName>
        <fullName evidence="2">30S ribosomal protein S18</fullName>
    </alternativeName>
</protein>
<gene>
    <name evidence="1" type="primary">rpsR</name>
    <name type="ordered locus">DehaBAV1_0927</name>
</gene>
<reference key="1">
    <citation type="submission" date="2007-05" db="EMBL/GenBank/DDBJ databases">
        <title>Complete sequence of Dehalococcoides sp. BAV1.</title>
        <authorList>
            <consortium name="US DOE Joint Genome Institute"/>
            <person name="Copeland A."/>
            <person name="Lucas S."/>
            <person name="Lapidus A."/>
            <person name="Barry K."/>
            <person name="Detter J.C."/>
            <person name="Glavina del Rio T."/>
            <person name="Hammon N."/>
            <person name="Israni S."/>
            <person name="Pitluck S."/>
            <person name="Lowry S."/>
            <person name="Clum A."/>
            <person name="Schmutz J."/>
            <person name="Larimer F."/>
            <person name="Land M."/>
            <person name="Hauser L."/>
            <person name="Kyrpides N."/>
            <person name="Kim E."/>
            <person name="Ritalahti K.M."/>
            <person name="Loeffler F."/>
            <person name="Richardson P."/>
        </authorList>
    </citation>
    <scope>NUCLEOTIDE SEQUENCE [LARGE SCALE GENOMIC DNA]</scope>
    <source>
        <strain>ATCC BAA-2100 / JCM 16839 / KCTC 5957 / BAV1</strain>
    </source>
</reference>